<protein>
    <recommendedName>
        <fullName evidence="1">Succinate--CoA ligase [ADP-forming] subunit beta</fullName>
        <ecNumber evidence="1">6.2.1.5</ecNumber>
    </recommendedName>
    <alternativeName>
        <fullName evidence="1">Succinyl-CoA synthetase subunit beta</fullName>
        <shortName evidence="1">SCS-beta</shortName>
    </alternativeName>
</protein>
<keyword id="KW-0067">ATP-binding</keyword>
<keyword id="KW-0436">Ligase</keyword>
<keyword id="KW-0460">Magnesium</keyword>
<keyword id="KW-0479">Metal-binding</keyword>
<keyword id="KW-0547">Nucleotide-binding</keyword>
<keyword id="KW-0816">Tricarboxylic acid cycle</keyword>
<reference key="1">
    <citation type="journal article" date="2006" name="PLoS Genet.">
        <title>Comparative genomics of emerging human ehrlichiosis agents.</title>
        <authorList>
            <person name="Dunning Hotopp J.C."/>
            <person name="Lin M."/>
            <person name="Madupu R."/>
            <person name="Crabtree J."/>
            <person name="Angiuoli S.V."/>
            <person name="Eisen J.A."/>
            <person name="Seshadri R."/>
            <person name="Ren Q."/>
            <person name="Wu M."/>
            <person name="Utterback T.R."/>
            <person name="Smith S."/>
            <person name="Lewis M."/>
            <person name="Khouri H."/>
            <person name="Zhang C."/>
            <person name="Niu H."/>
            <person name="Lin Q."/>
            <person name="Ohashi N."/>
            <person name="Zhi N."/>
            <person name="Nelson W.C."/>
            <person name="Brinkac L.M."/>
            <person name="Dodson R.J."/>
            <person name="Rosovitz M.J."/>
            <person name="Sundaram J.P."/>
            <person name="Daugherty S.C."/>
            <person name="Davidsen T."/>
            <person name="Durkin A.S."/>
            <person name="Gwinn M.L."/>
            <person name="Haft D.H."/>
            <person name="Selengut J.D."/>
            <person name="Sullivan S.A."/>
            <person name="Zafar N."/>
            <person name="Zhou L."/>
            <person name="Benahmed F."/>
            <person name="Forberger H."/>
            <person name="Halpin R."/>
            <person name="Mulligan S."/>
            <person name="Robinson J."/>
            <person name="White O."/>
            <person name="Rikihisa Y."/>
            <person name="Tettelin H."/>
        </authorList>
    </citation>
    <scope>NUCLEOTIDE SEQUENCE [LARGE SCALE GENOMIC DNA]</scope>
    <source>
        <strain>HZ</strain>
    </source>
</reference>
<gene>
    <name evidence="1" type="primary">sucC</name>
    <name type="ordered locus">APH_1052</name>
</gene>
<comment type="function">
    <text evidence="1">Succinyl-CoA synthetase functions in the citric acid cycle (TCA), coupling the hydrolysis of succinyl-CoA to the synthesis of either ATP or GTP and thus represents the only step of substrate-level phosphorylation in the TCA. The beta subunit provides nucleotide specificity of the enzyme and binds the substrate succinate, while the binding sites for coenzyme A and phosphate are found in the alpha subunit.</text>
</comment>
<comment type="catalytic activity">
    <reaction evidence="1">
        <text>succinate + ATP + CoA = succinyl-CoA + ADP + phosphate</text>
        <dbReference type="Rhea" id="RHEA:17661"/>
        <dbReference type="ChEBI" id="CHEBI:30031"/>
        <dbReference type="ChEBI" id="CHEBI:30616"/>
        <dbReference type="ChEBI" id="CHEBI:43474"/>
        <dbReference type="ChEBI" id="CHEBI:57287"/>
        <dbReference type="ChEBI" id="CHEBI:57292"/>
        <dbReference type="ChEBI" id="CHEBI:456216"/>
        <dbReference type="EC" id="6.2.1.5"/>
    </reaction>
    <physiologicalReaction direction="right-to-left" evidence="1">
        <dbReference type="Rhea" id="RHEA:17663"/>
    </physiologicalReaction>
</comment>
<comment type="catalytic activity">
    <reaction evidence="1">
        <text>GTP + succinate + CoA = succinyl-CoA + GDP + phosphate</text>
        <dbReference type="Rhea" id="RHEA:22120"/>
        <dbReference type="ChEBI" id="CHEBI:30031"/>
        <dbReference type="ChEBI" id="CHEBI:37565"/>
        <dbReference type="ChEBI" id="CHEBI:43474"/>
        <dbReference type="ChEBI" id="CHEBI:57287"/>
        <dbReference type="ChEBI" id="CHEBI:57292"/>
        <dbReference type="ChEBI" id="CHEBI:58189"/>
    </reaction>
    <physiologicalReaction direction="right-to-left" evidence="1">
        <dbReference type="Rhea" id="RHEA:22122"/>
    </physiologicalReaction>
</comment>
<comment type="cofactor">
    <cofactor evidence="1">
        <name>Mg(2+)</name>
        <dbReference type="ChEBI" id="CHEBI:18420"/>
    </cofactor>
    <text evidence="1">Binds 1 Mg(2+) ion per subunit.</text>
</comment>
<comment type="pathway">
    <text evidence="1">Carbohydrate metabolism; tricarboxylic acid cycle; succinate from succinyl-CoA (ligase route): step 1/1.</text>
</comment>
<comment type="subunit">
    <text evidence="1">Heterotetramer of two alpha and two beta subunits.</text>
</comment>
<comment type="similarity">
    <text evidence="1">Belongs to the succinate/malate CoA ligase beta subunit family.</text>
</comment>
<organism>
    <name type="scientific">Anaplasma phagocytophilum (strain HZ)</name>
    <dbReference type="NCBI Taxonomy" id="212042"/>
    <lineage>
        <taxon>Bacteria</taxon>
        <taxon>Pseudomonadati</taxon>
        <taxon>Pseudomonadota</taxon>
        <taxon>Alphaproteobacteria</taxon>
        <taxon>Rickettsiales</taxon>
        <taxon>Anaplasmataceae</taxon>
        <taxon>Anaplasma</taxon>
        <taxon>phagocytophilum group</taxon>
    </lineage>
</organism>
<name>SUCC_ANAPZ</name>
<accession>Q2GJ42</accession>
<evidence type="ECO:0000255" key="1">
    <source>
        <dbReference type="HAMAP-Rule" id="MF_00558"/>
    </source>
</evidence>
<sequence length="388" mass="41378">MNVHEFQAKGILSGFDVRVPKGVVVRSVEEVDSALGSLAAGIVAVKAQIHAGGRGKAGGVKIGKAREEVADLVKSMLGSVLVTHQTSAAGQKVHAVYLEEGVSIKKEYYLGAVVDRKAGMVSVIFSSEGGMDIEEVAHSRPEMVVVVNVDPVYGFLDFHGRKLCYGLGLKKEQVVQITAMARKVCRALMETDASQVEINPLVETTCGEFIALDAKMTFDDNGLFRRPEIVKLTDPHEYSEEELEAAKYGLSYIKLDGNIGCMVNGAGLAMATMDIVKYYGGEPANFLDVGGGASKDTVREAFKIILRSGVDGILVNIFGGIMRCDVIAAGIIESAKEIGVSVPMVVRLSGTNYKIGKEMLDASGLSIVTAENLDEAARFVVDLVGKRG</sequence>
<dbReference type="EC" id="6.2.1.5" evidence="1"/>
<dbReference type="EMBL" id="CP000235">
    <property type="protein sequence ID" value="ABD44388.1"/>
    <property type="molecule type" value="Genomic_DNA"/>
</dbReference>
<dbReference type="RefSeq" id="WP_011451121.1">
    <property type="nucleotide sequence ID" value="NC_007797.1"/>
</dbReference>
<dbReference type="SMR" id="Q2GJ42"/>
<dbReference type="STRING" id="212042.APH_1052"/>
<dbReference type="PaxDb" id="212042-APH_1052"/>
<dbReference type="EnsemblBacteria" id="ABD44388">
    <property type="protein sequence ID" value="ABD44388"/>
    <property type="gene ID" value="APH_1052"/>
</dbReference>
<dbReference type="GeneID" id="92748022"/>
<dbReference type="KEGG" id="aph:APH_1052"/>
<dbReference type="eggNOG" id="COG0045">
    <property type="taxonomic scope" value="Bacteria"/>
</dbReference>
<dbReference type="HOGENOM" id="CLU_037430_0_2_5"/>
<dbReference type="UniPathway" id="UPA00223">
    <property type="reaction ID" value="UER00999"/>
</dbReference>
<dbReference type="Proteomes" id="UP000001943">
    <property type="component" value="Chromosome"/>
</dbReference>
<dbReference type="GO" id="GO:0005829">
    <property type="term" value="C:cytosol"/>
    <property type="evidence" value="ECO:0007669"/>
    <property type="project" value="TreeGrafter"/>
</dbReference>
<dbReference type="GO" id="GO:0042709">
    <property type="term" value="C:succinate-CoA ligase complex"/>
    <property type="evidence" value="ECO:0007669"/>
    <property type="project" value="TreeGrafter"/>
</dbReference>
<dbReference type="GO" id="GO:0005524">
    <property type="term" value="F:ATP binding"/>
    <property type="evidence" value="ECO:0007669"/>
    <property type="project" value="UniProtKB-UniRule"/>
</dbReference>
<dbReference type="GO" id="GO:0000287">
    <property type="term" value="F:magnesium ion binding"/>
    <property type="evidence" value="ECO:0007669"/>
    <property type="project" value="UniProtKB-UniRule"/>
</dbReference>
<dbReference type="GO" id="GO:0004775">
    <property type="term" value="F:succinate-CoA ligase (ADP-forming) activity"/>
    <property type="evidence" value="ECO:0007669"/>
    <property type="project" value="UniProtKB-UniRule"/>
</dbReference>
<dbReference type="GO" id="GO:0004776">
    <property type="term" value="F:succinate-CoA ligase (GDP-forming) activity"/>
    <property type="evidence" value="ECO:0007669"/>
    <property type="project" value="RHEA"/>
</dbReference>
<dbReference type="GO" id="GO:0006104">
    <property type="term" value="P:succinyl-CoA metabolic process"/>
    <property type="evidence" value="ECO:0007669"/>
    <property type="project" value="TreeGrafter"/>
</dbReference>
<dbReference type="GO" id="GO:0006099">
    <property type="term" value="P:tricarboxylic acid cycle"/>
    <property type="evidence" value="ECO:0007669"/>
    <property type="project" value="UniProtKB-UniRule"/>
</dbReference>
<dbReference type="FunFam" id="3.30.1490.20:FF:000002">
    <property type="entry name" value="Succinate--CoA ligase [ADP-forming] subunit beta"/>
    <property type="match status" value="1"/>
</dbReference>
<dbReference type="FunFam" id="3.30.470.20:FF:000002">
    <property type="entry name" value="Succinate--CoA ligase [ADP-forming] subunit beta"/>
    <property type="match status" value="1"/>
</dbReference>
<dbReference type="FunFam" id="3.40.50.261:FF:000001">
    <property type="entry name" value="Succinate--CoA ligase [ADP-forming] subunit beta"/>
    <property type="match status" value="1"/>
</dbReference>
<dbReference type="Gene3D" id="3.30.1490.20">
    <property type="entry name" value="ATP-grasp fold, A domain"/>
    <property type="match status" value="1"/>
</dbReference>
<dbReference type="Gene3D" id="3.30.470.20">
    <property type="entry name" value="ATP-grasp fold, B domain"/>
    <property type="match status" value="1"/>
</dbReference>
<dbReference type="Gene3D" id="3.40.50.261">
    <property type="entry name" value="Succinyl-CoA synthetase domains"/>
    <property type="match status" value="1"/>
</dbReference>
<dbReference type="HAMAP" id="MF_00558">
    <property type="entry name" value="Succ_CoA_beta"/>
    <property type="match status" value="1"/>
</dbReference>
<dbReference type="InterPro" id="IPR013650">
    <property type="entry name" value="ATP-grasp_succ-CoA_synth-type"/>
</dbReference>
<dbReference type="InterPro" id="IPR013815">
    <property type="entry name" value="ATP_grasp_subdomain_1"/>
</dbReference>
<dbReference type="InterPro" id="IPR017866">
    <property type="entry name" value="Succ-CoA_synthase_bsu_CS"/>
</dbReference>
<dbReference type="InterPro" id="IPR005811">
    <property type="entry name" value="SUCC_ACL_C"/>
</dbReference>
<dbReference type="InterPro" id="IPR005809">
    <property type="entry name" value="Succ_CoA_ligase-like_bsu"/>
</dbReference>
<dbReference type="InterPro" id="IPR016102">
    <property type="entry name" value="Succinyl-CoA_synth-like"/>
</dbReference>
<dbReference type="NCBIfam" id="NF001913">
    <property type="entry name" value="PRK00696.1"/>
    <property type="match status" value="1"/>
</dbReference>
<dbReference type="NCBIfam" id="TIGR01016">
    <property type="entry name" value="sucCoAbeta"/>
    <property type="match status" value="1"/>
</dbReference>
<dbReference type="PANTHER" id="PTHR11815:SF10">
    <property type="entry name" value="SUCCINATE--COA LIGASE [GDP-FORMING] SUBUNIT BETA, MITOCHONDRIAL"/>
    <property type="match status" value="1"/>
</dbReference>
<dbReference type="PANTHER" id="PTHR11815">
    <property type="entry name" value="SUCCINYL-COA SYNTHETASE BETA CHAIN"/>
    <property type="match status" value="1"/>
</dbReference>
<dbReference type="Pfam" id="PF08442">
    <property type="entry name" value="ATP-grasp_2"/>
    <property type="match status" value="1"/>
</dbReference>
<dbReference type="Pfam" id="PF00549">
    <property type="entry name" value="Ligase_CoA"/>
    <property type="match status" value="1"/>
</dbReference>
<dbReference type="PIRSF" id="PIRSF001554">
    <property type="entry name" value="SucCS_beta"/>
    <property type="match status" value="1"/>
</dbReference>
<dbReference type="SUPFAM" id="SSF56059">
    <property type="entry name" value="Glutathione synthetase ATP-binding domain-like"/>
    <property type="match status" value="1"/>
</dbReference>
<dbReference type="SUPFAM" id="SSF52210">
    <property type="entry name" value="Succinyl-CoA synthetase domains"/>
    <property type="match status" value="1"/>
</dbReference>
<dbReference type="PROSITE" id="PS01217">
    <property type="entry name" value="SUCCINYL_COA_LIG_3"/>
    <property type="match status" value="1"/>
</dbReference>
<proteinExistence type="inferred from homology"/>
<feature type="chain" id="PRO_1000081999" description="Succinate--CoA ligase [ADP-forming] subunit beta">
    <location>
        <begin position="1"/>
        <end position="388"/>
    </location>
</feature>
<feature type="domain" description="ATP-grasp" evidence="1">
    <location>
        <begin position="9"/>
        <end position="244"/>
    </location>
</feature>
<feature type="binding site" evidence="1">
    <location>
        <position position="46"/>
    </location>
    <ligand>
        <name>ATP</name>
        <dbReference type="ChEBI" id="CHEBI:30616"/>
    </ligand>
</feature>
<feature type="binding site" evidence="1">
    <location>
        <begin position="53"/>
        <end position="55"/>
    </location>
    <ligand>
        <name>ATP</name>
        <dbReference type="ChEBI" id="CHEBI:30616"/>
    </ligand>
</feature>
<feature type="binding site" evidence="1">
    <location>
        <position position="99"/>
    </location>
    <ligand>
        <name>ATP</name>
        <dbReference type="ChEBI" id="CHEBI:30616"/>
    </ligand>
</feature>
<feature type="binding site" evidence="1">
    <location>
        <position position="102"/>
    </location>
    <ligand>
        <name>ATP</name>
        <dbReference type="ChEBI" id="CHEBI:30616"/>
    </ligand>
</feature>
<feature type="binding site" evidence="1">
    <location>
        <position position="107"/>
    </location>
    <ligand>
        <name>ATP</name>
        <dbReference type="ChEBI" id="CHEBI:30616"/>
    </ligand>
</feature>
<feature type="binding site" evidence="1">
    <location>
        <position position="199"/>
    </location>
    <ligand>
        <name>Mg(2+)</name>
        <dbReference type="ChEBI" id="CHEBI:18420"/>
    </ligand>
</feature>
<feature type="binding site" evidence="1">
    <location>
        <position position="213"/>
    </location>
    <ligand>
        <name>Mg(2+)</name>
        <dbReference type="ChEBI" id="CHEBI:18420"/>
    </ligand>
</feature>
<feature type="binding site" evidence="1">
    <location>
        <position position="264"/>
    </location>
    <ligand>
        <name>substrate</name>
        <note>ligand shared with subunit alpha</note>
    </ligand>
</feature>
<feature type="binding site" evidence="1">
    <location>
        <begin position="320"/>
        <end position="322"/>
    </location>
    <ligand>
        <name>substrate</name>
        <note>ligand shared with subunit alpha</note>
    </ligand>
</feature>